<evidence type="ECO:0000255" key="1">
    <source>
        <dbReference type="HAMAP-Rule" id="MF_01430"/>
    </source>
</evidence>
<evidence type="ECO:0000255" key="2">
    <source>
        <dbReference type="PROSITE-ProRule" id="PRU01115"/>
    </source>
</evidence>
<keyword id="KW-0998">Cell outer membrane</keyword>
<keyword id="KW-0472">Membrane</keyword>
<keyword id="KW-0677">Repeat</keyword>
<keyword id="KW-0732">Signal</keyword>
<keyword id="KW-0812">Transmembrane</keyword>
<keyword id="KW-1134">Transmembrane beta strand</keyword>
<comment type="function">
    <text evidence="1">Part of the outer membrane protein assembly complex, which is involved in assembly and insertion of beta-barrel proteins into the outer membrane. Constitutes, with BamD, the core component of the assembly machinery.</text>
</comment>
<comment type="subunit">
    <text evidence="1">Part of the Bam complex, which is composed of the outer membrane protein BamA, and four lipoproteins BamB, BamC, BamD and BamE.</text>
</comment>
<comment type="subcellular location">
    <subcellularLocation>
        <location evidence="1">Cell outer membrane</location>
    </subcellularLocation>
</comment>
<comment type="similarity">
    <text evidence="1">Belongs to the BamA family.</text>
</comment>
<dbReference type="EMBL" id="CU928160">
    <property type="protein sequence ID" value="CAQ97064.1"/>
    <property type="molecule type" value="Genomic_DNA"/>
</dbReference>
<dbReference type="RefSeq" id="WP_001240896.1">
    <property type="nucleotide sequence ID" value="NC_011741.1"/>
</dbReference>
<dbReference type="SMR" id="B7M1Y0"/>
<dbReference type="GeneID" id="93777248"/>
<dbReference type="KEGG" id="ecr:ECIAI1_0176"/>
<dbReference type="HOGENOM" id="CLU_007664_1_0_6"/>
<dbReference type="GO" id="GO:1990063">
    <property type="term" value="C:Bam protein complex"/>
    <property type="evidence" value="ECO:0007669"/>
    <property type="project" value="TreeGrafter"/>
</dbReference>
<dbReference type="GO" id="GO:0043165">
    <property type="term" value="P:Gram-negative-bacterium-type cell outer membrane assembly"/>
    <property type="evidence" value="ECO:0007669"/>
    <property type="project" value="UniProtKB-UniRule"/>
</dbReference>
<dbReference type="GO" id="GO:0051205">
    <property type="term" value="P:protein insertion into membrane"/>
    <property type="evidence" value="ECO:0007669"/>
    <property type="project" value="UniProtKB-UniRule"/>
</dbReference>
<dbReference type="FunFam" id="2.40.160.50:FF:000001">
    <property type="entry name" value="Outer membrane protein assembly factor BamA"/>
    <property type="match status" value="1"/>
</dbReference>
<dbReference type="FunFam" id="3.10.20.310:FF:000001">
    <property type="entry name" value="Outer membrane protein assembly factor BamA"/>
    <property type="match status" value="1"/>
</dbReference>
<dbReference type="FunFam" id="3.10.20.310:FF:000002">
    <property type="entry name" value="Outer membrane protein assembly factor BamA"/>
    <property type="match status" value="1"/>
</dbReference>
<dbReference type="FunFam" id="3.10.20.310:FF:000003">
    <property type="entry name" value="Outer membrane protein assembly factor BamA"/>
    <property type="match status" value="1"/>
</dbReference>
<dbReference type="FunFam" id="3.10.20.310:FF:000004">
    <property type="entry name" value="Outer membrane protein assembly factor BamA"/>
    <property type="match status" value="1"/>
</dbReference>
<dbReference type="FunFam" id="3.10.20.310:FF:000005">
    <property type="entry name" value="Outer membrane protein assembly factor BamA"/>
    <property type="match status" value="1"/>
</dbReference>
<dbReference type="Gene3D" id="3.10.20.310">
    <property type="entry name" value="membrane protein fhac"/>
    <property type="match status" value="5"/>
</dbReference>
<dbReference type="Gene3D" id="2.40.160.50">
    <property type="entry name" value="membrane protein fhac: a member of the omp85/tpsb transporter family"/>
    <property type="match status" value="1"/>
</dbReference>
<dbReference type="HAMAP" id="MF_01430">
    <property type="entry name" value="OM_assembly_BamA"/>
    <property type="match status" value="1"/>
</dbReference>
<dbReference type="InterPro" id="IPR000184">
    <property type="entry name" value="Bac_surfAg_D15"/>
</dbReference>
<dbReference type="InterPro" id="IPR010827">
    <property type="entry name" value="BamA/TamA_POTRA"/>
</dbReference>
<dbReference type="InterPro" id="IPR039910">
    <property type="entry name" value="D15-like"/>
</dbReference>
<dbReference type="InterPro" id="IPR023707">
    <property type="entry name" value="OM_assembly_BamA"/>
</dbReference>
<dbReference type="InterPro" id="IPR034746">
    <property type="entry name" value="POTRA"/>
</dbReference>
<dbReference type="NCBIfam" id="TIGR03303">
    <property type="entry name" value="OM_YaeT"/>
    <property type="match status" value="1"/>
</dbReference>
<dbReference type="NCBIfam" id="NF008287">
    <property type="entry name" value="PRK11067.1"/>
    <property type="match status" value="1"/>
</dbReference>
<dbReference type="PANTHER" id="PTHR12815:SF23">
    <property type="entry name" value="OUTER MEMBRANE PROTEIN ASSEMBLY FACTOR BAMA"/>
    <property type="match status" value="1"/>
</dbReference>
<dbReference type="PANTHER" id="PTHR12815">
    <property type="entry name" value="SORTING AND ASSEMBLY MACHINERY SAMM50 PROTEIN FAMILY MEMBER"/>
    <property type="match status" value="1"/>
</dbReference>
<dbReference type="Pfam" id="PF01103">
    <property type="entry name" value="Omp85"/>
    <property type="match status" value="1"/>
</dbReference>
<dbReference type="Pfam" id="PF07244">
    <property type="entry name" value="POTRA"/>
    <property type="match status" value="4"/>
</dbReference>
<dbReference type="PIRSF" id="PIRSF006076">
    <property type="entry name" value="OM_assembly_OMP85"/>
    <property type="match status" value="1"/>
</dbReference>
<dbReference type="PROSITE" id="PS51779">
    <property type="entry name" value="POTRA"/>
    <property type="match status" value="5"/>
</dbReference>
<name>BAMA_ECO8A</name>
<feature type="signal peptide" evidence="1">
    <location>
        <begin position="1"/>
        <end position="20"/>
    </location>
</feature>
<feature type="chain" id="PRO_1000145773" description="Outer membrane protein assembly factor BamA">
    <location>
        <begin position="21"/>
        <end position="810"/>
    </location>
</feature>
<feature type="domain" description="POTRA 1" evidence="2">
    <location>
        <begin position="24"/>
        <end position="91"/>
    </location>
</feature>
<feature type="domain" description="POTRA 2" evidence="2">
    <location>
        <begin position="92"/>
        <end position="172"/>
    </location>
</feature>
<feature type="domain" description="POTRA 3" evidence="2">
    <location>
        <begin position="175"/>
        <end position="263"/>
    </location>
</feature>
<feature type="domain" description="POTRA 4" evidence="2">
    <location>
        <begin position="266"/>
        <end position="344"/>
    </location>
</feature>
<feature type="domain" description="POTRA 5" evidence="2">
    <location>
        <begin position="347"/>
        <end position="421"/>
    </location>
</feature>
<protein>
    <recommendedName>
        <fullName evidence="1">Outer membrane protein assembly factor BamA</fullName>
    </recommendedName>
</protein>
<proteinExistence type="inferred from homology"/>
<gene>
    <name evidence="1" type="primary">bamA</name>
    <name type="synonym">yaeT</name>
    <name type="ordered locus">ECIAI1_0176</name>
</gene>
<sequence>MAMKKLLIASLLFSSATVYGAEGFVVKDIHFEGLQRVAVGAALLSMPVRTGDTVNDEDISNTIRALFATGNFEDVRVLRDGDTLLVQVKERPTIASITFSGNKSVKDDMLKQNLEASGVRVGESLDRTTIADIEKGLEDFYYSVGKYSASVKAVVTPLPRNRVDLKLVFQEGVSAEIQQINIVGNHAFTTDELISHFQLRDEVPWWNVVGDRKYQKQKLAGDLETLRSYYLDRGYARFNIDSTQVSLTPDKKGIYVTVNITEGDQYKLSGVEVSGNLAGHSAEIEQLTKIEPGELYNGTKVTKMEDDIKKLLGRYGYAYPRVQSMPEINDADKTVKLRVNVDAGNRFYVRKIRFEGNDTSKDAVLRREMRQMEGAWLGSDLVDQGKERLNRLGFFETVDTDTQRVPGSPDQVDVVYKVKERNTGSFNFGIGYGTESGVSFQAGVQQDNWLGTGYAVGINGTKNDYQTYAELSVTNPYFTVDGVSLGGRLFYNDFQADDADLSDYTNKSYGTDVTLGFPINEYNSLRAGLGYVHNSLSNMQPQVAMWRYLYSMGEHPSTSDQDNSFKTDDFTFNYGWTYNKLDRGYFPTDGSRVNLTGKVTIPGSDNEYYKVTLDTATYVPIDDDHKWVVLGRTRWGYGDGLGGKEMPFYENFYAGGSSTVRGFQSNTIGPKAVYFPHQASNYDPDYDYECATQDGAKDLCKSDDAVGGNAMAVASLEFITPTPFISDKYANSVRTSFFWDMGTVWDTNWDSSQYSGYPDYSDPSNIRMSAGIALQWMSPLGPLVFSYAQPFKKYDGDKAEQFQFNIGKTW</sequence>
<organism>
    <name type="scientific">Escherichia coli O8 (strain IAI1)</name>
    <dbReference type="NCBI Taxonomy" id="585034"/>
    <lineage>
        <taxon>Bacteria</taxon>
        <taxon>Pseudomonadati</taxon>
        <taxon>Pseudomonadota</taxon>
        <taxon>Gammaproteobacteria</taxon>
        <taxon>Enterobacterales</taxon>
        <taxon>Enterobacteriaceae</taxon>
        <taxon>Escherichia</taxon>
    </lineage>
</organism>
<accession>B7M1Y0</accession>
<reference key="1">
    <citation type="journal article" date="2009" name="PLoS Genet.">
        <title>Organised genome dynamics in the Escherichia coli species results in highly diverse adaptive paths.</title>
        <authorList>
            <person name="Touchon M."/>
            <person name="Hoede C."/>
            <person name="Tenaillon O."/>
            <person name="Barbe V."/>
            <person name="Baeriswyl S."/>
            <person name="Bidet P."/>
            <person name="Bingen E."/>
            <person name="Bonacorsi S."/>
            <person name="Bouchier C."/>
            <person name="Bouvet O."/>
            <person name="Calteau A."/>
            <person name="Chiapello H."/>
            <person name="Clermont O."/>
            <person name="Cruveiller S."/>
            <person name="Danchin A."/>
            <person name="Diard M."/>
            <person name="Dossat C."/>
            <person name="Karoui M.E."/>
            <person name="Frapy E."/>
            <person name="Garry L."/>
            <person name="Ghigo J.M."/>
            <person name="Gilles A.M."/>
            <person name="Johnson J."/>
            <person name="Le Bouguenec C."/>
            <person name="Lescat M."/>
            <person name="Mangenot S."/>
            <person name="Martinez-Jehanne V."/>
            <person name="Matic I."/>
            <person name="Nassif X."/>
            <person name="Oztas S."/>
            <person name="Petit M.A."/>
            <person name="Pichon C."/>
            <person name="Rouy Z."/>
            <person name="Ruf C.S."/>
            <person name="Schneider D."/>
            <person name="Tourret J."/>
            <person name="Vacherie B."/>
            <person name="Vallenet D."/>
            <person name="Medigue C."/>
            <person name="Rocha E.P.C."/>
            <person name="Denamur E."/>
        </authorList>
    </citation>
    <scope>NUCLEOTIDE SEQUENCE [LARGE SCALE GENOMIC DNA]</scope>
    <source>
        <strain>IAI1</strain>
    </source>
</reference>